<gene>
    <name evidence="1" type="primary">mnmE</name>
    <name evidence="1" type="synonym">trmE</name>
    <name type="ordered locus">BruAb1_2037</name>
</gene>
<comment type="function">
    <text evidence="1">Exhibits a very high intrinsic GTPase hydrolysis rate. Involved in the addition of a carboxymethylaminomethyl (cmnm) group at the wobble position (U34) of certain tRNAs, forming tRNA-cmnm(5)s(2)U34.</text>
</comment>
<comment type="cofactor">
    <cofactor evidence="1">
        <name>K(+)</name>
        <dbReference type="ChEBI" id="CHEBI:29103"/>
    </cofactor>
    <text evidence="1">Binds 1 potassium ion per subunit.</text>
</comment>
<comment type="subunit">
    <text evidence="1">Homodimer. Heterotetramer of two MnmE and two MnmG subunits.</text>
</comment>
<comment type="subcellular location">
    <subcellularLocation>
        <location evidence="1">Cytoplasm</location>
    </subcellularLocation>
</comment>
<comment type="similarity">
    <text evidence="1">Belongs to the TRAFAC class TrmE-Era-EngA-EngB-Septin-like GTPase superfamily. TrmE GTPase family.</text>
</comment>
<reference key="1">
    <citation type="journal article" date="2005" name="J. Bacteriol.">
        <title>Completion of the genome sequence of Brucella abortus and comparison to the highly similar genomes of Brucella melitensis and Brucella suis.</title>
        <authorList>
            <person name="Halling S.M."/>
            <person name="Peterson-Burch B.D."/>
            <person name="Bricker B.J."/>
            <person name="Zuerner R.L."/>
            <person name="Qing Z."/>
            <person name="Li L.-L."/>
            <person name="Kapur V."/>
            <person name="Alt D.P."/>
            <person name="Olsen S.C."/>
        </authorList>
    </citation>
    <scope>NUCLEOTIDE SEQUENCE [LARGE SCALE GENOMIC DNA]</scope>
    <source>
        <strain>9-941</strain>
    </source>
</reference>
<accession>Q57AJ6</accession>
<name>MNME_BRUAB</name>
<evidence type="ECO:0000255" key="1">
    <source>
        <dbReference type="HAMAP-Rule" id="MF_00379"/>
    </source>
</evidence>
<sequence length="442" mass="48103">MSEIGSYHDTIFALSSGRLPSGVAVIRISGPKTRFVYETICQAIPEPRHAALLTFRSRNGDAIDRGLTLFFPAPHSFTGEDCAEFHLHGGKAVVEKMLAVLGELPGCRIAEAGEFTRRAFANGKMDLTIAEGLADLIAAETEGQRRLAMQVASGNQRKLYSEWRQRLINARAFIEAELDFADESDVPGSVSMQVWQQLSALKHEIEHHIASGKRAAMLRDGLHVVIVGAPNAGKSSLLNFLAGRDVAIISEEAGTTRDLLEVKLDLGGIPVYVTDTAGLRETDSVVEKIGIERARARMAEADLVLSLEDMSGPVSVTVEKIEAETWLIGTKADLGGSASGLWKYHISTMTGSGLEQLLDALQAFAEAKIGQIEDAVPTRQRHINLLRATIEEIEKAIEGDDLPLELRAENMRLASQFLGRITGDVDVEEILDVMFSQFCIGK</sequence>
<feature type="chain" id="PRO_0000345727" description="tRNA modification GTPase MnmE">
    <location>
        <begin position="1"/>
        <end position="442"/>
    </location>
</feature>
<feature type="domain" description="TrmE-type G">
    <location>
        <begin position="221"/>
        <end position="366"/>
    </location>
</feature>
<feature type="binding site" evidence="1">
    <location>
        <position position="27"/>
    </location>
    <ligand>
        <name>(6S)-5-formyl-5,6,7,8-tetrahydrofolate</name>
        <dbReference type="ChEBI" id="CHEBI:57457"/>
    </ligand>
</feature>
<feature type="binding site" evidence="1">
    <location>
        <position position="84"/>
    </location>
    <ligand>
        <name>(6S)-5-formyl-5,6,7,8-tetrahydrofolate</name>
        <dbReference type="ChEBI" id="CHEBI:57457"/>
    </ligand>
</feature>
<feature type="binding site" evidence="1">
    <location>
        <position position="124"/>
    </location>
    <ligand>
        <name>(6S)-5-formyl-5,6,7,8-tetrahydrofolate</name>
        <dbReference type="ChEBI" id="CHEBI:57457"/>
    </ligand>
</feature>
<feature type="binding site" evidence="1">
    <location>
        <begin position="231"/>
        <end position="236"/>
    </location>
    <ligand>
        <name>GTP</name>
        <dbReference type="ChEBI" id="CHEBI:37565"/>
    </ligand>
</feature>
<feature type="binding site" evidence="1">
    <location>
        <position position="235"/>
    </location>
    <ligand>
        <name>Mg(2+)</name>
        <dbReference type="ChEBI" id="CHEBI:18420"/>
    </ligand>
</feature>
<feature type="binding site" evidence="1">
    <location>
        <begin position="250"/>
        <end position="256"/>
    </location>
    <ligand>
        <name>GTP</name>
        <dbReference type="ChEBI" id="CHEBI:37565"/>
    </ligand>
</feature>
<feature type="binding site" evidence="1">
    <location>
        <position position="256"/>
    </location>
    <ligand>
        <name>Mg(2+)</name>
        <dbReference type="ChEBI" id="CHEBI:18420"/>
    </ligand>
</feature>
<feature type="binding site" evidence="1">
    <location>
        <begin position="275"/>
        <end position="278"/>
    </location>
    <ligand>
        <name>GTP</name>
        <dbReference type="ChEBI" id="CHEBI:37565"/>
    </ligand>
</feature>
<feature type="binding site" evidence="1">
    <location>
        <position position="442"/>
    </location>
    <ligand>
        <name>(6S)-5-formyl-5,6,7,8-tetrahydrofolate</name>
        <dbReference type="ChEBI" id="CHEBI:57457"/>
    </ligand>
</feature>
<proteinExistence type="inferred from homology"/>
<dbReference type="EC" id="3.6.-.-" evidence="1"/>
<dbReference type="EMBL" id="AE017223">
    <property type="protein sequence ID" value="AAX75338.1"/>
    <property type="molecule type" value="Genomic_DNA"/>
</dbReference>
<dbReference type="RefSeq" id="WP_002965126.1">
    <property type="nucleotide sequence ID" value="NC_006932.1"/>
</dbReference>
<dbReference type="SMR" id="Q57AJ6"/>
<dbReference type="EnsemblBacteria" id="AAX75338">
    <property type="protein sequence ID" value="AAX75338"/>
    <property type="gene ID" value="BruAb1_2037"/>
</dbReference>
<dbReference type="GeneID" id="93017627"/>
<dbReference type="KEGG" id="bmb:BruAb1_2037"/>
<dbReference type="HOGENOM" id="CLU_019624_3_1_5"/>
<dbReference type="Proteomes" id="UP000000540">
    <property type="component" value="Chromosome I"/>
</dbReference>
<dbReference type="GO" id="GO:0005737">
    <property type="term" value="C:cytoplasm"/>
    <property type="evidence" value="ECO:0007669"/>
    <property type="project" value="UniProtKB-SubCell"/>
</dbReference>
<dbReference type="GO" id="GO:0005525">
    <property type="term" value="F:GTP binding"/>
    <property type="evidence" value="ECO:0007669"/>
    <property type="project" value="UniProtKB-UniRule"/>
</dbReference>
<dbReference type="GO" id="GO:0003924">
    <property type="term" value="F:GTPase activity"/>
    <property type="evidence" value="ECO:0007669"/>
    <property type="project" value="UniProtKB-UniRule"/>
</dbReference>
<dbReference type="GO" id="GO:0046872">
    <property type="term" value="F:metal ion binding"/>
    <property type="evidence" value="ECO:0007669"/>
    <property type="project" value="UniProtKB-KW"/>
</dbReference>
<dbReference type="GO" id="GO:0030488">
    <property type="term" value="P:tRNA methylation"/>
    <property type="evidence" value="ECO:0007669"/>
    <property type="project" value="TreeGrafter"/>
</dbReference>
<dbReference type="GO" id="GO:0002098">
    <property type="term" value="P:tRNA wobble uridine modification"/>
    <property type="evidence" value="ECO:0007669"/>
    <property type="project" value="TreeGrafter"/>
</dbReference>
<dbReference type="CDD" id="cd04164">
    <property type="entry name" value="trmE"/>
    <property type="match status" value="1"/>
</dbReference>
<dbReference type="CDD" id="cd14858">
    <property type="entry name" value="TrmE_N"/>
    <property type="match status" value="1"/>
</dbReference>
<dbReference type="FunFam" id="3.30.1360.120:FF:000007">
    <property type="entry name" value="tRNA modification GTPase GTPBP3, mitochondrial"/>
    <property type="match status" value="1"/>
</dbReference>
<dbReference type="Gene3D" id="3.40.50.300">
    <property type="entry name" value="P-loop containing nucleotide triphosphate hydrolases"/>
    <property type="match status" value="1"/>
</dbReference>
<dbReference type="Gene3D" id="3.30.1360.120">
    <property type="entry name" value="Probable tRNA modification gtpase trme, domain 1"/>
    <property type="match status" value="1"/>
</dbReference>
<dbReference type="Gene3D" id="1.20.120.430">
    <property type="entry name" value="tRNA modification GTPase MnmE domain 2"/>
    <property type="match status" value="1"/>
</dbReference>
<dbReference type="HAMAP" id="MF_00379">
    <property type="entry name" value="GTPase_MnmE"/>
    <property type="match status" value="1"/>
</dbReference>
<dbReference type="InterPro" id="IPR031168">
    <property type="entry name" value="G_TrmE"/>
</dbReference>
<dbReference type="InterPro" id="IPR006073">
    <property type="entry name" value="GTP-bd"/>
</dbReference>
<dbReference type="InterPro" id="IPR018948">
    <property type="entry name" value="GTP-bd_TrmE_N"/>
</dbReference>
<dbReference type="InterPro" id="IPR004520">
    <property type="entry name" value="GTPase_MnmE"/>
</dbReference>
<dbReference type="InterPro" id="IPR027368">
    <property type="entry name" value="MnmE_dom2"/>
</dbReference>
<dbReference type="InterPro" id="IPR025867">
    <property type="entry name" value="MnmE_helical"/>
</dbReference>
<dbReference type="InterPro" id="IPR027417">
    <property type="entry name" value="P-loop_NTPase"/>
</dbReference>
<dbReference type="InterPro" id="IPR005225">
    <property type="entry name" value="Small_GTP-bd"/>
</dbReference>
<dbReference type="InterPro" id="IPR027266">
    <property type="entry name" value="TrmE/GcvT_dom1"/>
</dbReference>
<dbReference type="NCBIfam" id="TIGR00450">
    <property type="entry name" value="mnmE_trmE_thdF"/>
    <property type="match status" value="1"/>
</dbReference>
<dbReference type="NCBIfam" id="NF003661">
    <property type="entry name" value="PRK05291.1-3"/>
    <property type="match status" value="1"/>
</dbReference>
<dbReference type="NCBIfam" id="TIGR00231">
    <property type="entry name" value="small_GTP"/>
    <property type="match status" value="1"/>
</dbReference>
<dbReference type="PANTHER" id="PTHR42714">
    <property type="entry name" value="TRNA MODIFICATION GTPASE GTPBP3"/>
    <property type="match status" value="1"/>
</dbReference>
<dbReference type="PANTHER" id="PTHR42714:SF2">
    <property type="entry name" value="TRNA MODIFICATION GTPASE GTPBP3, MITOCHONDRIAL"/>
    <property type="match status" value="1"/>
</dbReference>
<dbReference type="Pfam" id="PF01926">
    <property type="entry name" value="MMR_HSR1"/>
    <property type="match status" value="1"/>
</dbReference>
<dbReference type="Pfam" id="PF12631">
    <property type="entry name" value="MnmE_helical"/>
    <property type="match status" value="1"/>
</dbReference>
<dbReference type="Pfam" id="PF10396">
    <property type="entry name" value="TrmE_N"/>
    <property type="match status" value="1"/>
</dbReference>
<dbReference type="SUPFAM" id="SSF52540">
    <property type="entry name" value="P-loop containing nucleoside triphosphate hydrolases"/>
    <property type="match status" value="1"/>
</dbReference>
<dbReference type="SUPFAM" id="SSF116878">
    <property type="entry name" value="TrmE connector domain"/>
    <property type="match status" value="1"/>
</dbReference>
<dbReference type="PROSITE" id="PS51709">
    <property type="entry name" value="G_TRME"/>
    <property type="match status" value="1"/>
</dbReference>
<organism>
    <name type="scientific">Brucella abortus biovar 1 (strain 9-941)</name>
    <dbReference type="NCBI Taxonomy" id="262698"/>
    <lineage>
        <taxon>Bacteria</taxon>
        <taxon>Pseudomonadati</taxon>
        <taxon>Pseudomonadota</taxon>
        <taxon>Alphaproteobacteria</taxon>
        <taxon>Hyphomicrobiales</taxon>
        <taxon>Brucellaceae</taxon>
        <taxon>Brucella/Ochrobactrum group</taxon>
        <taxon>Brucella</taxon>
    </lineage>
</organism>
<keyword id="KW-0963">Cytoplasm</keyword>
<keyword id="KW-0342">GTP-binding</keyword>
<keyword id="KW-0378">Hydrolase</keyword>
<keyword id="KW-0460">Magnesium</keyword>
<keyword id="KW-0479">Metal-binding</keyword>
<keyword id="KW-0547">Nucleotide-binding</keyword>
<keyword id="KW-0630">Potassium</keyword>
<keyword id="KW-0819">tRNA processing</keyword>
<protein>
    <recommendedName>
        <fullName evidence="1">tRNA modification GTPase MnmE</fullName>
        <ecNumber evidence="1">3.6.-.-</ecNumber>
    </recommendedName>
</protein>